<protein>
    <recommendedName>
        <fullName evidence="1">Imidazolonepropionase</fullName>
        <ecNumber evidence="1">3.5.2.7</ecNumber>
    </recommendedName>
    <alternativeName>
        <fullName evidence="1">Imidazolone-5-propionate hydrolase</fullName>
    </alternativeName>
</protein>
<feature type="chain" id="PRO_0000306450" description="Imidazolonepropionase">
    <location>
        <begin position="1"/>
        <end position="407"/>
    </location>
</feature>
<feature type="binding site" evidence="1">
    <location>
        <position position="68"/>
    </location>
    <ligand>
        <name>Fe(3+)</name>
        <dbReference type="ChEBI" id="CHEBI:29034"/>
    </ligand>
</feature>
<feature type="binding site" evidence="1">
    <location>
        <position position="68"/>
    </location>
    <ligand>
        <name>Zn(2+)</name>
        <dbReference type="ChEBI" id="CHEBI:29105"/>
    </ligand>
</feature>
<feature type="binding site" evidence="1">
    <location>
        <position position="70"/>
    </location>
    <ligand>
        <name>Fe(3+)</name>
        <dbReference type="ChEBI" id="CHEBI:29034"/>
    </ligand>
</feature>
<feature type="binding site" evidence="1">
    <location>
        <position position="70"/>
    </location>
    <ligand>
        <name>Zn(2+)</name>
        <dbReference type="ChEBI" id="CHEBI:29105"/>
    </ligand>
</feature>
<feature type="binding site" evidence="1">
    <location>
        <position position="77"/>
    </location>
    <ligand>
        <name>4-imidazolone-5-propanoate</name>
        <dbReference type="ChEBI" id="CHEBI:77893"/>
    </ligand>
</feature>
<feature type="binding site" evidence="1">
    <location>
        <position position="140"/>
    </location>
    <ligand>
        <name>4-imidazolone-5-propanoate</name>
        <dbReference type="ChEBI" id="CHEBI:77893"/>
    </ligand>
</feature>
<feature type="binding site" evidence="1">
    <location>
        <position position="140"/>
    </location>
    <ligand>
        <name>N-formimidoyl-L-glutamate</name>
        <dbReference type="ChEBI" id="CHEBI:58928"/>
    </ligand>
</feature>
<feature type="binding site" evidence="1">
    <location>
        <position position="173"/>
    </location>
    <ligand>
        <name>4-imidazolone-5-propanoate</name>
        <dbReference type="ChEBI" id="CHEBI:77893"/>
    </ligand>
</feature>
<feature type="binding site" evidence="1">
    <location>
        <position position="238"/>
    </location>
    <ligand>
        <name>Fe(3+)</name>
        <dbReference type="ChEBI" id="CHEBI:29034"/>
    </ligand>
</feature>
<feature type="binding site" evidence="1">
    <location>
        <position position="238"/>
    </location>
    <ligand>
        <name>Zn(2+)</name>
        <dbReference type="ChEBI" id="CHEBI:29105"/>
    </ligand>
</feature>
<feature type="binding site" evidence="1">
    <location>
        <position position="241"/>
    </location>
    <ligand>
        <name>4-imidazolone-5-propanoate</name>
        <dbReference type="ChEBI" id="CHEBI:77893"/>
    </ligand>
</feature>
<feature type="binding site" evidence="1">
    <location>
        <position position="313"/>
    </location>
    <ligand>
        <name>Fe(3+)</name>
        <dbReference type="ChEBI" id="CHEBI:29034"/>
    </ligand>
</feature>
<feature type="binding site" evidence="1">
    <location>
        <position position="313"/>
    </location>
    <ligand>
        <name>Zn(2+)</name>
        <dbReference type="ChEBI" id="CHEBI:29105"/>
    </ligand>
</feature>
<feature type="binding site" evidence="1">
    <location>
        <position position="315"/>
    </location>
    <ligand>
        <name>N-formimidoyl-L-glutamate</name>
        <dbReference type="ChEBI" id="CHEBI:58928"/>
    </ligand>
</feature>
<feature type="binding site" evidence="1">
    <location>
        <position position="317"/>
    </location>
    <ligand>
        <name>N-formimidoyl-L-glutamate</name>
        <dbReference type="ChEBI" id="CHEBI:58928"/>
    </ligand>
</feature>
<feature type="binding site" evidence="1">
    <location>
        <position position="318"/>
    </location>
    <ligand>
        <name>4-imidazolone-5-propanoate</name>
        <dbReference type="ChEBI" id="CHEBI:77893"/>
    </ligand>
</feature>
<dbReference type="EC" id="3.5.2.7" evidence="1"/>
<dbReference type="EMBL" id="BX571965">
    <property type="protein sequence ID" value="CAH36343.1"/>
    <property type="molecule type" value="Genomic_DNA"/>
</dbReference>
<dbReference type="RefSeq" id="WP_004524690.1">
    <property type="nucleotide sequence ID" value="NZ_CP009538.1"/>
</dbReference>
<dbReference type="RefSeq" id="YP_108936.1">
    <property type="nucleotide sequence ID" value="NC_006350.1"/>
</dbReference>
<dbReference type="SMR" id="Q63SI0"/>
<dbReference type="STRING" id="272560.BPSL2340"/>
<dbReference type="GeneID" id="93060911"/>
<dbReference type="KEGG" id="bps:BPSL2340"/>
<dbReference type="PATRIC" id="fig|272560.51.peg.3079"/>
<dbReference type="eggNOG" id="COG1228">
    <property type="taxonomic scope" value="Bacteria"/>
</dbReference>
<dbReference type="UniPathway" id="UPA00379">
    <property type="reaction ID" value="UER00551"/>
</dbReference>
<dbReference type="Proteomes" id="UP000000605">
    <property type="component" value="Chromosome 1"/>
</dbReference>
<dbReference type="GO" id="GO:0005737">
    <property type="term" value="C:cytoplasm"/>
    <property type="evidence" value="ECO:0007669"/>
    <property type="project" value="UniProtKB-SubCell"/>
</dbReference>
<dbReference type="GO" id="GO:0050480">
    <property type="term" value="F:imidazolonepropionase activity"/>
    <property type="evidence" value="ECO:0007669"/>
    <property type="project" value="UniProtKB-UniRule"/>
</dbReference>
<dbReference type="GO" id="GO:0005506">
    <property type="term" value="F:iron ion binding"/>
    <property type="evidence" value="ECO:0007669"/>
    <property type="project" value="UniProtKB-UniRule"/>
</dbReference>
<dbReference type="GO" id="GO:0008270">
    <property type="term" value="F:zinc ion binding"/>
    <property type="evidence" value="ECO:0007669"/>
    <property type="project" value="UniProtKB-UniRule"/>
</dbReference>
<dbReference type="GO" id="GO:0019556">
    <property type="term" value="P:L-histidine catabolic process to glutamate and formamide"/>
    <property type="evidence" value="ECO:0007669"/>
    <property type="project" value="UniProtKB-UniPathway"/>
</dbReference>
<dbReference type="GO" id="GO:0019557">
    <property type="term" value="P:L-histidine catabolic process to glutamate and formate"/>
    <property type="evidence" value="ECO:0007669"/>
    <property type="project" value="UniProtKB-UniPathway"/>
</dbReference>
<dbReference type="CDD" id="cd01296">
    <property type="entry name" value="Imidazolone-5PH"/>
    <property type="match status" value="1"/>
</dbReference>
<dbReference type="FunFam" id="3.20.20.140:FF:000007">
    <property type="entry name" value="Imidazolonepropionase"/>
    <property type="match status" value="1"/>
</dbReference>
<dbReference type="Gene3D" id="3.20.20.140">
    <property type="entry name" value="Metal-dependent hydrolases"/>
    <property type="match status" value="1"/>
</dbReference>
<dbReference type="Gene3D" id="2.30.40.10">
    <property type="entry name" value="Urease, subunit C, domain 1"/>
    <property type="match status" value="1"/>
</dbReference>
<dbReference type="HAMAP" id="MF_00372">
    <property type="entry name" value="HutI"/>
    <property type="match status" value="1"/>
</dbReference>
<dbReference type="InterPro" id="IPR006680">
    <property type="entry name" value="Amidohydro-rel"/>
</dbReference>
<dbReference type="InterPro" id="IPR005920">
    <property type="entry name" value="HutI"/>
</dbReference>
<dbReference type="InterPro" id="IPR011059">
    <property type="entry name" value="Metal-dep_hydrolase_composite"/>
</dbReference>
<dbReference type="InterPro" id="IPR032466">
    <property type="entry name" value="Metal_Hydrolase"/>
</dbReference>
<dbReference type="NCBIfam" id="TIGR01224">
    <property type="entry name" value="hutI"/>
    <property type="match status" value="1"/>
</dbReference>
<dbReference type="PANTHER" id="PTHR42752">
    <property type="entry name" value="IMIDAZOLONEPROPIONASE"/>
    <property type="match status" value="1"/>
</dbReference>
<dbReference type="PANTHER" id="PTHR42752:SF1">
    <property type="entry name" value="IMIDAZOLONEPROPIONASE-RELATED"/>
    <property type="match status" value="1"/>
</dbReference>
<dbReference type="Pfam" id="PF01979">
    <property type="entry name" value="Amidohydro_1"/>
    <property type="match status" value="1"/>
</dbReference>
<dbReference type="SUPFAM" id="SSF51338">
    <property type="entry name" value="Composite domain of metallo-dependent hydrolases"/>
    <property type="match status" value="1"/>
</dbReference>
<dbReference type="SUPFAM" id="SSF51556">
    <property type="entry name" value="Metallo-dependent hydrolases"/>
    <property type="match status" value="1"/>
</dbReference>
<organism>
    <name type="scientific">Burkholderia pseudomallei (strain K96243)</name>
    <dbReference type="NCBI Taxonomy" id="272560"/>
    <lineage>
        <taxon>Bacteria</taxon>
        <taxon>Pseudomonadati</taxon>
        <taxon>Pseudomonadota</taxon>
        <taxon>Betaproteobacteria</taxon>
        <taxon>Burkholderiales</taxon>
        <taxon>Burkholderiaceae</taxon>
        <taxon>Burkholderia</taxon>
        <taxon>pseudomallei group</taxon>
    </lineage>
</organism>
<keyword id="KW-0963">Cytoplasm</keyword>
<keyword id="KW-0369">Histidine metabolism</keyword>
<keyword id="KW-0378">Hydrolase</keyword>
<keyword id="KW-0408">Iron</keyword>
<keyword id="KW-0479">Metal-binding</keyword>
<keyword id="KW-1185">Reference proteome</keyword>
<keyword id="KW-0862">Zinc</keyword>
<accession>Q63SI0</accession>
<gene>
    <name evidence="1" type="primary">hutI</name>
    <name type="ordered locus">BPSL2340</name>
</gene>
<evidence type="ECO:0000255" key="1">
    <source>
        <dbReference type="HAMAP-Rule" id="MF_00372"/>
    </source>
</evidence>
<sequence length="407" mass="43787">MKSILWHNLKLCAHGDPNDTIADAAIAVNGDGTIAWTGRASDVPAGYVHWPREDLRGAWVTPGLVDCHTHLVYGGQRADEFAQRLAGASYEEIAQRGGGIVSTVRATRDASEAALFEQACARLRPLLAEGVTAIEIKSGYGLELASERRMLRVARQLGERFPVSVYTTFLGAHALPPEYAGRADEYIDEVCERMLPALADEGLVDAVDVFCERIGFTLAQSERVFEAAARRGLPVKMHAEQLSNGGGSALAARYRALSADHLEYLDAAGVAAMRASGTTAVLLPGAYYFIRETKLPPIDLLRRHGVPIALATDHNPGTSPLTSLLLTMNMGCTVFKLTVQEALLGVTRHAAAALGASDRHGSLAPGRQADFAVWPVSTLAELAYWFGRPLCERVVKGGVTVFTRDAR</sequence>
<reference key="1">
    <citation type="journal article" date="2004" name="Proc. Natl. Acad. Sci. U.S.A.">
        <title>Genomic plasticity of the causative agent of melioidosis, Burkholderia pseudomallei.</title>
        <authorList>
            <person name="Holden M.T.G."/>
            <person name="Titball R.W."/>
            <person name="Peacock S.J."/>
            <person name="Cerdeno-Tarraga A.-M."/>
            <person name="Atkins T."/>
            <person name="Crossman L.C."/>
            <person name="Pitt T."/>
            <person name="Churcher C."/>
            <person name="Mungall K.L."/>
            <person name="Bentley S.D."/>
            <person name="Sebaihia M."/>
            <person name="Thomson N.R."/>
            <person name="Bason N."/>
            <person name="Beacham I.R."/>
            <person name="Brooks K."/>
            <person name="Brown K.A."/>
            <person name="Brown N.F."/>
            <person name="Challis G.L."/>
            <person name="Cherevach I."/>
            <person name="Chillingworth T."/>
            <person name="Cronin A."/>
            <person name="Crossett B."/>
            <person name="Davis P."/>
            <person name="DeShazer D."/>
            <person name="Feltwell T."/>
            <person name="Fraser A."/>
            <person name="Hance Z."/>
            <person name="Hauser H."/>
            <person name="Holroyd S."/>
            <person name="Jagels K."/>
            <person name="Keith K.E."/>
            <person name="Maddison M."/>
            <person name="Moule S."/>
            <person name="Price C."/>
            <person name="Quail M.A."/>
            <person name="Rabbinowitsch E."/>
            <person name="Rutherford K."/>
            <person name="Sanders M."/>
            <person name="Simmonds M."/>
            <person name="Songsivilai S."/>
            <person name="Stevens K."/>
            <person name="Tumapa S."/>
            <person name="Vesaratchavest M."/>
            <person name="Whitehead S."/>
            <person name="Yeats C."/>
            <person name="Barrell B.G."/>
            <person name="Oyston P.C.F."/>
            <person name="Parkhill J."/>
        </authorList>
    </citation>
    <scope>NUCLEOTIDE SEQUENCE [LARGE SCALE GENOMIC DNA]</scope>
    <source>
        <strain>K96243</strain>
    </source>
</reference>
<name>HUTI_BURPS</name>
<comment type="function">
    <text evidence="1">Catalyzes the hydrolytic cleavage of the carbon-nitrogen bond in imidazolone-5-propanoate to yield N-formimidoyl-L-glutamate. It is the third step in the universal histidine degradation pathway.</text>
</comment>
<comment type="catalytic activity">
    <reaction evidence="1">
        <text>4-imidazolone-5-propanoate + H2O = N-formimidoyl-L-glutamate</text>
        <dbReference type="Rhea" id="RHEA:23660"/>
        <dbReference type="ChEBI" id="CHEBI:15377"/>
        <dbReference type="ChEBI" id="CHEBI:58928"/>
        <dbReference type="ChEBI" id="CHEBI:77893"/>
        <dbReference type="EC" id="3.5.2.7"/>
    </reaction>
</comment>
<comment type="cofactor">
    <cofactor evidence="1">
        <name>Zn(2+)</name>
        <dbReference type="ChEBI" id="CHEBI:29105"/>
    </cofactor>
    <cofactor evidence="1">
        <name>Fe(3+)</name>
        <dbReference type="ChEBI" id="CHEBI:29034"/>
    </cofactor>
    <text evidence="1">Binds 1 zinc or iron ion per subunit.</text>
</comment>
<comment type="pathway">
    <text evidence="1">Amino-acid degradation; L-histidine degradation into L-glutamate; N-formimidoyl-L-glutamate from L-histidine: step 3/3.</text>
</comment>
<comment type="subcellular location">
    <subcellularLocation>
        <location evidence="1">Cytoplasm</location>
    </subcellularLocation>
</comment>
<comment type="similarity">
    <text evidence="1">Belongs to the metallo-dependent hydrolases superfamily. HutI family.</text>
</comment>
<proteinExistence type="inferred from homology"/>